<name>BROMI_MOUSE</name>
<protein>
    <recommendedName>
        <fullName>Protein broad-minded</fullName>
    </recommendedName>
    <alternativeName>
        <fullName>TBC1 domain family member 32</fullName>
    </alternativeName>
</protein>
<evidence type="ECO:0000250" key="1">
    <source>
        <dbReference type="UniProtKB" id="Q96NH3"/>
    </source>
</evidence>
<evidence type="ECO:0000269" key="2">
    <source>
    </source>
</evidence>
<evidence type="ECO:0000303" key="3">
    <source>
    </source>
</evidence>
<evidence type="ECO:0000305" key="4"/>
<keyword id="KW-0025">Alternative splicing</keyword>
<keyword id="KW-0966">Cell projection</keyword>
<keyword id="KW-0969">Cilium</keyword>
<keyword id="KW-0963">Cytoplasm</keyword>
<keyword id="KW-0217">Developmental protein</keyword>
<keyword id="KW-1185">Reference proteome</keyword>
<dbReference type="EMBL" id="AC153518">
    <property type="status" value="NOT_ANNOTATED_CDS"/>
    <property type="molecule type" value="Genomic_DNA"/>
</dbReference>
<dbReference type="EMBL" id="AC153521">
    <property type="status" value="NOT_ANNOTATED_CDS"/>
    <property type="molecule type" value="Genomic_DNA"/>
</dbReference>
<dbReference type="EMBL" id="AC155829">
    <property type="status" value="NOT_ANNOTATED_CDS"/>
    <property type="molecule type" value="Genomic_DNA"/>
</dbReference>
<dbReference type="EMBL" id="AK141206">
    <property type="protein sequence ID" value="BAE24586.1"/>
    <property type="status" value="ALT_INIT"/>
    <property type="molecule type" value="mRNA"/>
</dbReference>
<dbReference type="CCDS" id="CCDS48562.1">
    <molecule id="Q3URV1-1"/>
</dbReference>
<dbReference type="RefSeq" id="NP_001028557.2">
    <molecule id="Q3URV1-1"/>
    <property type="nucleotide sequence ID" value="NM_001033385.3"/>
</dbReference>
<dbReference type="BioGRID" id="243551">
    <property type="interactions" value="1"/>
</dbReference>
<dbReference type="FunCoup" id="Q3URV1">
    <property type="interactions" value="153"/>
</dbReference>
<dbReference type="STRING" id="10090.ENSMUSP00000097328"/>
<dbReference type="PhosphoSitePlus" id="Q3URV1"/>
<dbReference type="PaxDb" id="10090-ENSMUSP00000097328"/>
<dbReference type="ProteomicsDB" id="265235">
    <molecule id="Q3URV1-1"/>
</dbReference>
<dbReference type="ProteomicsDB" id="265236">
    <molecule id="Q3URV1-2"/>
</dbReference>
<dbReference type="Pumba" id="Q3URV1"/>
<dbReference type="Antibodypedia" id="35180">
    <property type="antibodies" value="57 antibodies from 13 providers"/>
</dbReference>
<dbReference type="Ensembl" id="ENSMUST00000099739.5">
    <molecule id="Q3URV1-1"/>
    <property type="protein sequence ID" value="ENSMUSP00000097328.4"/>
    <property type="gene ID" value="ENSMUSG00000038122.10"/>
</dbReference>
<dbReference type="GeneID" id="544696"/>
<dbReference type="KEGG" id="mmu:544696"/>
<dbReference type="UCSC" id="uc007fca.1">
    <molecule id="Q3URV1-1"/>
    <property type="organism name" value="mouse"/>
</dbReference>
<dbReference type="AGR" id="MGI:2442827"/>
<dbReference type="CTD" id="221322"/>
<dbReference type="MGI" id="MGI:2442827">
    <property type="gene designation" value="Tbc1d32"/>
</dbReference>
<dbReference type="VEuPathDB" id="HostDB:ENSMUSG00000038122"/>
<dbReference type="eggNOG" id="ENOG502QR93">
    <property type="taxonomic scope" value="Eukaryota"/>
</dbReference>
<dbReference type="GeneTree" id="ENSGT00940000153528"/>
<dbReference type="HOGENOM" id="CLU_260246_0_0_1"/>
<dbReference type="InParanoid" id="Q3URV1"/>
<dbReference type="OMA" id="ECVTFMS"/>
<dbReference type="OrthoDB" id="1668230at2759"/>
<dbReference type="PhylomeDB" id="Q3URV1"/>
<dbReference type="TreeFam" id="TF329092"/>
<dbReference type="BioGRID-ORCS" id="544696">
    <property type="hits" value="5 hits in 75 CRISPR screens"/>
</dbReference>
<dbReference type="PRO" id="PR:Q3URV1"/>
<dbReference type="Proteomes" id="UP000000589">
    <property type="component" value="Chromosome 10"/>
</dbReference>
<dbReference type="RNAct" id="Q3URV1">
    <property type="molecule type" value="protein"/>
</dbReference>
<dbReference type="Bgee" id="ENSMUSG00000038122">
    <property type="expression patterns" value="Expressed in pineal body and 218 other cell types or tissues"/>
</dbReference>
<dbReference type="GO" id="GO:0005929">
    <property type="term" value="C:cilium"/>
    <property type="evidence" value="ECO:0007669"/>
    <property type="project" value="UniProtKB-SubCell"/>
</dbReference>
<dbReference type="GO" id="GO:0005737">
    <property type="term" value="C:cytoplasm"/>
    <property type="evidence" value="ECO:0007669"/>
    <property type="project" value="UniProtKB-SubCell"/>
</dbReference>
<dbReference type="GO" id="GO:0035082">
    <property type="term" value="P:axoneme assembly"/>
    <property type="evidence" value="ECO:0000266"/>
    <property type="project" value="MGI"/>
</dbReference>
<dbReference type="GO" id="GO:0043010">
    <property type="term" value="P:camera-type eye development"/>
    <property type="evidence" value="ECO:0000315"/>
    <property type="project" value="MGI"/>
</dbReference>
<dbReference type="GO" id="GO:0060271">
    <property type="term" value="P:cilium assembly"/>
    <property type="evidence" value="ECO:0000316"/>
    <property type="project" value="MGI"/>
</dbReference>
<dbReference type="GO" id="GO:0007368">
    <property type="term" value="P:determination of left/right symmetry"/>
    <property type="evidence" value="ECO:0000315"/>
    <property type="project" value="MGI"/>
</dbReference>
<dbReference type="GO" id="GO:0042733">
    <property type="term" value="P:embryonic digit morphogenesis"/>
    <property type="evidence" value="ECO:0000315"/>
    <property type="project" value="MGI"/>
</dbReference>
<dbReference type="GO" id="GO:0007507">
    <property type="term" value="P:heart development"/>
    <property type="evidence" value="ECO:0000315"/>
    <property type="project" value="MGI"/>
</dbReference>
<dbReference type="GO" id="GO:0001822">
    <property type="term" value="P:kidney development"/>
    <property type="evidence" value="ECO:0000315"/>
    <property type="project" value="MGI"/>
</dbReference>
<dbReference type="GO" id="GO:0002088">
    <property type="term" value="P:lens development in camera-type eye"/>
    <property type="evidence" value="ECO:0000315"/>
    <property type="project" value="MGI"/>
</dbReference>
<dbReference type="GO" id="GO:0021915">
    <property type="term" value="P:neural tube development"/>
    <property type="evidence" value="ECO:0000315"/>
    <property type="project" value="MGI"/>
</dbReference>
<dbReference type="GO" id="GO:0021532">
    <property type="term" value="P:neural tube patterning"/>
    <property type="evidence" value="ECO:0000316"/>
    <property type="project" value="MGI"/>
</dbReference>
<dbReference type="GO" id="GO:1905515">
    <property type="term" value="P:non-motile cilium assembly"/>
    <property type="evidence" value="ECO:0000315"/>
    <property type="project" value="MGI"/>
</dbReference>
<dbReference type="GO" id="GO:0061512">
    <property type="term" value="P:protein localization to cilium"/>
    <property type="evidence" value="ECO:0000315"/>
    <property type="project" value="MGI"/>
</dbReference>
<dbReference type="GO" id="GO:0060041">
    <property type="term" value="P:retina development in camera-type eye"/>
    <property type="evidence" value="ECO:0000315"/>
    <property type="project" value="MGI"/>
</dbReference>
<dbReference type="GO" id="GO:0003406">
    <property type="term" value="P:retinal pigment epithelium development"/>
    <property type="evidence" value="ECO:0000315"/>
    <property type="project" value="MGI"/>
</dbReference>
<dbReference type="GO" id="GO:0060021">
    <property type="term" value="P:roof of mouth development"/>
    <property type="evidence" value="ECO:0000315"/>
    <property type="project" value="MGI"/>
</dbReference>
<dbReference type="GO" id="GO:0007224">
    <property type="term" value="P:smoothened signaling pathway"/>
    <property type="evidence" value="ECO:0000315"/>
    <property type="project" value="MGI"/>
</dbReference>
<dbReference type="GO" id="GO:0060831">
    <property type="term" value="P:smoothened signaling pathway involved in dorsal/ventral neural tube patterning"/>
    <property type="evidence" value="ECO:0000316"/>
    <property type="project" value="MGI"/>
</dbReference>
<dbReference type="FunFam" id="1.10.472.80:FF:000031">
    <property type="entry name" value="TBC1 domain family, member 32"/>
    <property type="match status" value="1"/>
</dbReference>
<dbReference type="Gene3D" id="1.10.472.80">
    <property type="entry name" value="Ypt/Rab-GAP domain of gyp1p, domain 3"/>
    <property type="match status" value="1"/>
</dbReference>
<dbReference type="InterPro" id="IPR055392">
    <property type="entry name" value="BROMI_C"/>
</dbReference>
<dbReference type="InterPro" id="IPR032735">
    <property type="entry name" value="BROMI_M"/>
</dbReference>
<dbReference type="InterPro" id="IPR055391">
    <property type="entry name" value="BROMI_N"/>
</dbReference>
<dbReference type="InterPro" id="IPR039156">
    <property type="entry name" value="PHAF1/BROMI"/>
</dbReference>
<dbReference type="InterPro" id="IPR035969">
    <property type="entry name" value="Rab-GAP_TBC_sf"/>
</dbReference>
<dbReference type="PANTHER" id="PTHR13465:SF3">
    <property type="entry name" value="PROTEIN BROAD-MINDED"/>
    <property type="match status" value="1"/>
</dbReference>
<dbReference type="PANTHER" id="PTHR13465">
    <property type="entry name" value="UPF0183 PROTEIN"/>
    <property type="match status" value="1"/>
</dbReference>
<dbReference type="Pfam" id="PF14961">
    <property type="entry name" value="BROMI"/>
    <property type="match status" value="1"/>
</dbReference>
<dbReference type="Pfam" id="PF23440">
    <property type="entry name" value="BROMI_C"/>
    <property type="match status" value="1"/>
</dbReference>
<dbReference type="Pfam" id="PF23431">
    <property type="entry name" value="BROMI_N"/>
    <property type="match status" value="1"/>
</dbReference>
<dbReference type="SUPFAM" id="SSF47923">
    <property type="entry name" value="Ypt/Rab-GAP domain of gyp1p"/>
    <property type="match status" value="1"/>
</dbReference>
<proteinExistence type="evidence at protein level"/>
<accession>Q3URV1</accession>
<organism>
    <name type="scientific">Mus musculus</name>
    <name type="common">Mouse</name>
    <dbReference type="NCBI Taxonomy" id="10090"/>
    <lineage>
        <taxon>Eukaryota</taxon>
        <taxon>Metazoa</taxon>
        <taxon>Chordata</taxon>
        <taxon>Craniata</taxon>
        <taxon>Vertebrata</taxon>
        <taxon>Euteleostomi</taxon>
        <taxon>Mammalia</taxon>
        <taxon>Eutheria</taxon>
        <taxon>Euarchontoglires</taxon>
        <taxon>Glires</taxon>
        <taxon>Rodentia</taxon>
        <taxon>Myomorpha</taxon>
        <taxon>Muroidea</taxon>
        <taxon>Muridae</taxon>
        <taxon>Murinae</taxon>
        <taxon>Mus</taxon>
        <taxon>Mus</taxon>
    </lineage>
</organism>
<feature type="chain" id="PRO_0000393609" description="Protein broad-minded">
    <location>
        <begin position="1"/>
        <end position="1296"/>
    </location>
</feature>
<feature type="domain" description="Rab-GAP TBC">
    <location>
        <begin position="1158"/>
        <end position="1281"/>
    </location>
</feature>
<feature type="splice variant" id="VSP_039021" description="In isoform 2." evidence="3">
    <original>RYLPVDTLGTGIHPIYFCSAHYIEMLLKAEVPLVFSAFHMSGFAPSQICLQWITQCFWNYLDWIEICHYIATCVVLGPDYQVYVCIAVLKHLQRDILQHTQTQDLQVFLKEEALHGFRVSNYFEYMENLEQNYRPVLLRDMRSIRVQNT</original>
    <variation>VRLKDLVLKES</variation>
    <location>
        <begin position="1148"/>
        <end position="1296"/>
    </location>
</feature>
<gene>
    <name type="primary">Tbc1d32</name>
    <name type="synonym">Bromi</name>
</gene>
<reference key="1">
    <citation type="journal article" date="2009" name="PLoS Biol.">
        <title>Lineage-specific biology revealed by a finished genome assembly of the mouse.</title>
        <authorList>
            <person name="Church D.M."/>
            <person name="Goodstadt L."/>
            <person name="Hillier L.W."/>
            <person name="Zody M.C."/>
            <person name="Goldstein S."/>
            <person name="She X."/>
            <person name="Bult C.J."/>
            <person name="Agarwala R."/>
            <person name="Cherry J.L."/>
            <person name="DiCuccio M."/>
            <person name="Hlavina W."/>
            <person name="Kapustin Y."/>
            <person name="Meric P."/>
            <person name="Maglott D."/>
            <person name="Birtle Z."/>
            <person name="Marques A.C."/>
            <person name="Graves T."/>
            <person name="Zhou S."/>
            <person name="Teague B."/>
            <person name="Potamousis K."/>
            <person name="Churas C."/>
            <person name="Place M."/>
            <person name="Herschleb J."/>
            <person name="Runnheim R."/>
            <person name="Forrest D."/>
            <person name="Amos-Landgraf J."/>
            <person name="Schwartz D.C."/>
            <person name="Cheng Z."/>
            <person name="Lindblad-Toh K."/>
            <person name="Eichler E.E."/>
            <person name="Ponting C.P."/>
        </authorList>
    </citation>
    <scope>NUCLEOTIDE SEQUENCE [LARGE SCALE GENOMIC DNA]</scope>
    <source>
        <strain>C57BL/6J</strain>
    </source>
</reference>
<reference key="2">
    <citation type="journal article" date="2005" name="Science">
        <title>The transcriptional landscape of the mammalian genome.</title>
        <authorList>
            <person name="Carninci P."/>
            <person name="Kasukawa T."/>
            <person name="Katayama S."/>
            <person name="Gough J."/>
            <person name="Frith M.C."/>
            <person name="Maeda N."/>
            <person name="Oyama R."/>
            <person name="Ravasi T."/>
            <person name="Lenhard B."/>
            <person name="Wells C."/>
            <person name="Kodzius R."/>
            <person name="Shimokawa K."/>
            <person name="Bajic V.B."/>
            <person name="Brenner S.E."/>
            <person name="Batalov S."/>
            <person name="Forrest A.R."/>
            <person name="Zavolan M."/>
            <person name="Davis M.J."/>
            <person name="Wilming L.G."/>
            <person name="Aidinis V."/>
            <person name="Allen J.E."/>
            <person name="Ambesi-Impiombato A."/>
            <person name="Apweiler R."/>
            <person name="Aturaliya R.N."/>
            <person name="Bailey T.L."/>
            <person name="Bansal M."/>
            <person name="Baxter L."/>
            <person name="Beisel K.W."/>
            <person name="Bersano T."/>
            <person name="Bono H."/>
            <person name="Chalk A.M."/>
            <person name="Chiu K.P."/>
            <person name="Choudhary V."/>
            <person name="Christoffels A."/>
            <person name="Clutterbuck D.R."/>
            <person name="Crowe M.L."/>
            <person name="Dalla E."/>
            <person name="Dalrymple B.P."/>
            <person name="de Bono B."/>
            <person name="Della Gatta G."/>
            <person name="di Bernardo D."/>
            <person name="Down T."/>
            <person name="Engstrom P."/>
            <person name="Fagiolini M."/>
            <person name="Faulkner G."/>
            <person name="Fletcher C.F."/>
            <person name="Fukushima T."/>
            <person name="Furuno M."/>
            <person name="Futaki S."/>
            <person name="Gariboldi M."/>
            <person name="Georgii-Hemming P."/>
            <person name="Gingeras T.R."/>
            <person name="Gojobori T."/>
            <person name="Green R.E."/>
            <person name="Gustincich S."/>
            <person name="Harbers M."/>
            <person name="Hayashi Y."/>
            <person name="Hensch T.K."/>
            <person name="Hirokawa N."/>
            <person name="Hill D."/>
            <person name="Huminiecki L."/>
            <person name="Iacono M."/>
            <person name="Ikeo K."/>
            <person name="Iwama A."/>
            <person name="Ishikawa T."/>
            <person name="Jakt M."/>
            <person name="Kanapin A."/>
            <person name="Katoh M."/>
            <person name="Kawasawa Y."/>
            <person name="Kelso J."/>
            <person name="Kitamura H."/>
            <person name="Kitano H."/>
            <person name="Kollias G."/>
            <person name="Krishnan S.P."/>
            <person name="Kruger A."/>
            <person name="Kummerfeld S.K."/>
            <person name="Kurochkin I.V."/>
            <person name="Lareau L.F."/>
            <person name="Lazarevic D."/>
            <person name="Lipovich L."/>
            <person name="Liu J."/>
            <person name="Liuni S."/>
            <person name="McWilliam S."/>
            <person name="Madan Babu M."/>
            <person name="Madera M."/>
            <person name="Marchionni L."/>
            <person name="Matsuda H."/>
            <person name="Matsuzawa S."/>
            <person name="Miki H."/>
            <person name="Mignone F."/>
            <person name="Miyake S."/>
            <person name="Morris K."/>
            <person name="Mottagui-Tabar S."/>
            <person name="Mulder N."/>
            <person name="Nakano N."/>
            <person name="Nakauchi H."/>
            <person name="Ng P."/>
            <person name="Nilsson R."/>
            <person name="Nishiguchi S."/>
            <person name="Nishikawa S."/>
            <person name="Nori F."/>
            <person name="Ohara O."/>
            <person name="Okazaki Y."/>
            <person name="Orlando V."/>
            <person name="Pang K.C."/>
            <person name="Pavan W.J."/>
            <person name="Pavesi G."/>
            <person name="Pesole G."/>
            <person name="Petrovsky N."/>
            <person name="Piazza S."/>
            <person name="Reed J."/>
            <person name="Reid J.F."/>
            <person name="Ring B.Z."/>
            <person name="Ringwald M."/>
            <person name="Rost B."/>
            <person name="Ruan Y."/>
            <person name="Salzberg S.L."/>
            <person name="Sandelin A."/>
            <person name="Schneider C."/>
            <person name="Schoenbach C."/>
            <person name="Sekiguchi K."/>
            <person name="Semple C.A."/>
            <person name="Seno S."/>
            <person name="Sessa L."/>
            <person name="Sheng Y."/>
            <person name="Shibata Y."/>
            <person name="Shimada H."/>
            <person name="Shimada K."/>
            <person name="Silva D."/>
            <person name="Sinclair B."/>
            <person name="Sperling S."/>
            <person name="Stupka E."/>
            <person name="Sugiura K."/>
            <person name="Sultana R."/>
            <person name="Takenaka Y."/>
            <person name="Taki K."/>
            <person name="Tammoja K."/>
            <person name="Tan S.L."/>
            <person name="Tang S."/>
            <person name="Taylor M.S."/>
            <person name="Tegner J."/>
            <person name="Teichmann S.A."/>
            <person name="Ueda H.R."/>
            <person name="van Nimwegen E."/>
            <person name="Verardo R."/>
            <person name="Wei C.L."/>
            <person name="Yagi K."/>
            <person name="Yamanishi H."/>
            <person name="Zabarovsky E."/>
            <person name="Zhu S."/>
            <person name="Zimmer A."/>
            <person name="Hide W."/>
            <person name="Bult C."/>
            <person name="Grimmond S.M."/>
            <person name="Teasdale R.D."/>
            <person name="Liu E.T."/>
            <person name="Brusic V."/>
            <person name="Quackenbush J."/>
            <person name="Wahlestedt C."/>
            <person name="Mattick J.S."/>
            <person name="Hume D.A."/>
            <person name="Kai C."/>
            <person name="Sasaki D."/>
            <person name="Tomaru Y."/>
            <person name="Fukuda S."/>
            <person name="Kanamori-Katayama M."/>
            <person name="Suzuki M."/>
            <person name="Aoki J."/>
            <person name="Arakawa T."/>
            <person name="Iida J."/>
            <person name="Imamura K."/>
            <person name="Itoh M."/>
            <person name="Kato T."/>
            <person name="Kawaji H."/>
            <person name="Kawagashira N."/>
            <person name="Kawashima T."/>
            <person name="Kojima M."/>
            <person name="Kondo S."/>
            <person name="Konno H."/>
            <person name="Nakano K."/>
            <person name="Ninomiya N."/>
            <person name="Nishio T."/>
            <person name="Okada M."/>
            <person name="Plessy C."/>
            <person name="Shibata K."/>
            <person name="Shiraki T."/>
            <person name="Suzuki S."/>
            <person name="Tagami M."/>
            <person name="Waki K."/>
            <person name="Watahiki A."/>
            <person name="Okamura-Oho Y."/>
            <person name="Suzuki H."/>
            <person name="Kawai J."/>
            <person name="Hayashizaki Y."/>
        </authorList>
    </citation>
    <scope>NUCLEOTIDE SEQUENCE [LARGE SCALE MRNA] OF 584-1296 (ISOFORM 2)</scope>
    <source>
        <strain>C57BL/6J</strain>
    </source>
</reference>
<reference key="3">
    <citation type="journal article" date="2010" name="Dev. Cell">
        <title>Broad-minded links cell cycle-related kinase to cilia assembly and hedgehog signal transduction.</title>
        <authorList>
            <person name="Ko H.W."/>
            <person name="Norman R.X."/>
            <person name="Tran J."/>
            <person name="Fuller K.P."/>
            <person name="Fukuda M."/>
            <person name="Eggenschwiler J.T."/>
        </authorList>
    </citation>
    <scope>FUNCTION</scope>
    <scope>DISRUPTION PHENOTYPE</scope>
    <scope>INTERACTION WITH CDK20</scope>
    <scope>SUBCELLULAR LOCATION</scope>
    <scope>DEVELOPMENTAL STAGE</scope>
</reference>
<sequence length="1296" mass="148061">MAHFSSEDEVMLQAMLRQLFQSVKEKITGAPSLECAEEILLRLEETDENFHNYEFVKYLRQHICNMLGSMIEEEMEKCTSDQNQGEDSGYDTVVQHVTKRTQESKEYKEMMHSLKNIMMVVVEAMINKFEEDETRSEDRQRKMQSGSCCTDNCSDSDSSFNQSYKFCQGKLRLILDQLDPGQPKEVRYEALQTLCSAPPSDVLSCENWTTLCEKLTTSLSDPDPMFTDRILKFYAQTFTLSPLHMTKEIYTSLAKYLEVYFLSRENHLPTLSTGVDITSPNVTRLLKKVRLLNEYQKEAPSFWIRHPEKYMEEIVESTLSLLSVKHEQSHLVPQKILDPIYFFALVDTKAVWFKKWMHAYYSRTAVLRLLEKKYKCLITTAVQQCVQYLELCEAMKADEILRHPKHCGTKQKSFYYSGQELQYIYFIHSLCLLGRLLIYTQGRKLFPIKLKNRKDSVSLTNLLVLFTQLIYYSPSCPKMTSIMCSENYSPASMVTDVLRMLCDQKECAVECLYNSTVTEALLLPIHNLTKGTAAAPDCSETALIHIADILARIASVEEGLILLLYGENMNSSEEESLTGAHIIAKFSKKLLEEDISIFSGSEMLPVVKGAFISVCRQIYGTCEGLQVLLPYGLHESIAKAWKKTSLLSERIPTPVEGSDSVSSVSQVSPNSVAWEDNLLDDLLNFAATPKGLLLLQRTGAINECVTFMLSQYAKKPQVNRQKKFGYEVLVVQVASTAAGAVALQNSGFISALITELWSNLECGRDDVRLTHPRATPVDPIDRSCQKSFLALVNLLSYPAVYELTANQELPNKAEYSLREVPTCIIDIMDRLIVLNSEAKIRSLLNYEQSHTFGLRLLSVVCCDLDALLLLEAQYQVSNMLLHAQEENTFEISENHRNFIIDGLSVERNHVLVRINLIGGPSERILPPRMLEKGDDPYPWPMFSSYPLPHCYQSEGPRSADLKQDNDIGNLLSCFKMSDKQTEWIENCRRQFCKTMKSKPDAVHGSALGELLEKFVLLLTENPSECYFPSVEYTATDANVKNESLSSVQQLGMKMTVRYGRFLNLLKDGAENELALVLKHCEKFLKQQQSPVTSSLLCLQGNYAGHDWFVSSLFMIMLGDKGKTFHFLQHFSRLLTSAFLWVPRLHNSRYLPVDTLGTGIHPIYFCSAHYIEMLLKAEVPLVFSAFHMSGFAPSQICLQWITQCFWNYLDWIEICHYIATCVVLGPDYQVYVCIAVLKHLQRDILQHTQTQDLQVFLKEEALHGFRVSNYFEYMENLEQNYRPVLLRDMRSIRVQNT</sequence>
<comment type="function">
    <text evidence="2">Required for high-level Shh responses in the developing neural tube. Together with CDK20, controls the structure of the primary cilium by coordinating assembly of the ciliary membrane and axoneme, allowing GLI2 to be properly activated in response to Shh signaling.</text>
</comment>
<comment type="subunit">
    <text evidence="1 2">Interacts with CDK20, which promotes CDK20 stability and function (PubMed:20159594). Interacts with FAM149B1; may play a role in cilium assembly.</text>
</comment>
<comment type="subcellular location">
    <subcellularLocation>
        <location evidence="2">Cytoplasm</location>
    </subcellularLocation>
    <subcellularLocation>
        <location evidence="2">Cell projection</location>
        <location evidence="2">Cilium</location>
    </subcellularLocation>
</comment>
<comment type="alternative products">
    <event type="alternative splicing"/>
    <isoform>
        <id>Q3URV1-1</id>
        <name>1</name>
        <sequence type="displayed"/>
    </isoform>
    <isoform>
        <id>Q3URV1-2</id>
        <name>2</name>
        <sequence type="described" ref="VSP_039021"/>
    </isoform>
</comment>
<comment type="developmental stage">
    <text evidence="2">Present at 10.5 dpc (at protein level).</text>
</comment>
<comment type="disruption phenotype">
    <text evidence="2">Mice exhibit exencephaly, poorly developed eyes and preaxial polydactyly, due to defects in ventral patterning.</text>
</comment>
<comment type="caution">
    <text evidence="4">The Rab-GAP TBC domain appears to be inactive, probably due to a lack of the essential Arg and Gln in the catalytic finger motifs.</text>
</comment>
<comment type="sequence caution" evidence="4">
    <conflict type="erroneous initiation">
        <sequence resource="EMBL-CDS" id="BAE24586"/>
    </conflict>
    <text>Truncated N-terminus.</text>
</comment>